<gene>
    <name type="primary">gpdA1</name>
    <name type="ordered locus">HVO_1538</name>
</gene>
<organism>
    <name type="scientific">Haloferax volcanii (strain ATCC 29605 / DSM 3757 / JCM 8879 / NBRC 14742 / NCIMB 2012 / VKM B-1768 / DS2)</name>
    <name type="common">Halobacterium volcanii</name>
    <dbReference type="NCBI Taxonomy" id="309800"/>
    <lineage>
        <taxon>Archaea</taxon>
        <taxon>Methanobacteriati</taxon>
        <taxon>Methanobacteriota</taxon>
        <taxon>Stenosarchaea group</taxon>
        <taxon>Halobacteria</taxon>
        <taxon>Halobacteriales</taxon>
        <taxon>Haloferacaceae</taxon>
        <taxon>Haloferax</taxon>
    </lineage>
</organism>
<reference key="1">
    <citation type="journal article" date="2010" name="PLoS ONE">
        <title>The complete genome sequence of Haloferax volcanii DS2, a model archaeon.</title>
        <authorList>
            <person name="Hartman A.L."/>
            <person name="Norais C."/>
            <person name="Badger J.H."/>
            <person name="Delmas S."/>
            <person name="Haldenby S."/>
            <person name="Madupu R."/>
            <person name="Robinson J."/>
            <person name="Khouri H."/>
            <person name="Ren Q."/>
            <person name="Lowe T.M."/>
            <person name="Maupin-Furlow J."/>
            <person name="Pohlschroder M."/>
            <person name="Daniels C."/>
            <person name="Pfeiffer F."/>
            <person name="Allers T."/>
            <person name="Eisen J.A."/>
        </authorList>
    </citation>
    <scope>NUCLEOTIDE SEQUENCE [LARGE SCALE GENOMIC DNA]</scope>
    <source>
        <strain>ATCC 29605 / DSM 3757 / JCM 8879 / NBRC 14742 / NCIMB 2012 / VKM B-1768 / DS2</strain>
    </source>
</reference>
<reference key="2">
    <citation type="journal article" date="2011" name="J. Bacteriol.">
        <title>Activity and transcriptional regulation of bacterial protein-like glycerol-3-phosphate dehydrogenase of the haloarchaea in Haloferax volcanii.</title>
        <authorList>
            <person name="Rawls K.S."/>
            <person name="Martin J.H."/>
            <person name="Maupin-Furlow J.A."/>
        </authorList>
    </citation>
    <scope>FUNCTION</scope>
    <scope>CATALYTIC ACTIVITY</scope>
    <scope>DISRUPTION PHENOTYPE</scope>
    <scope>ACTIVITY REGULATION</scope>
    <scope>INDUCTION BY GLYCEROL 3-PHOSPHATE</scope>
    <source>
        <strain>DS2 / DS70</strain>
    </source>
</reference>
<sequence>MKKSPSVLVIGGGSTGTGIARDLAMRGLDVTLVEKGNLTHGTTGRMHGLLHSGGRYAVSDQPSAKECIEENRVLRRIAGHCVEMTGGLFVQRPEDSDEYFEKKLEGCRECGIPAEVLSAEEAREIEPYLAKDIKRAIKVPDGAVDPFRLCVANAASAVEHGARIETHSEVTDVLVEGGEVVGVEVTHQTGTGPYVHGEPGEVEEIRADYVVNATGAWAGQIGDFAGVNVEVRPSKGVMTIMNTRQVDTVVNRCRPKGDADIIVPHETTCILGTTDEEVEDPEDYPEEGWEVDLMIETLSELVPMLADARTIRSFWGVRPLYEPPGTGTEDPTDITREFFLLDHADRDDLPGMTSIVGGKLTTYRMMAEQISDHVCEKLGVDAECRTADEPLPGSEDFTVLRDYMDDFGLRSPIGRRSAQRLGSRADEVLNSVDPNPVVCECEAVTRAEIQDALDTAGTDLNSVRIQTRASMGNCQGAICCHRMANELAPEYDEKTVRASLDDLYQERWKGERHAMWGTQLSQTALKHMLHAATMNRDEDPAAADADIDFAAFDDGVASGGAVADGGRERAADRADDDALGGADGDN</sequence>
<evidence type="ECO:0000250" key="1"/>
<evidence type="ECO:0000255" key="2"/>
<evidence type="ECO:0000256" key="3">
    <source>
        <dbReference type="SAM" id="MobiDB-lite"/>
    </source>
</evidence>
<evidence type="ECO:0000269" key="4">
    <source>
    </source>
</evidence>
<evidence type="ECO:0000305" key="5"/>
<evidence type="ECO:0000305" key="6">
    <source>
    </source>
</evidence>
<keyword id="KW-1003">Cell membrane</keyword>
<keyword id="KW-0274">FAD</keyword>
<keyword id="KW-0285">Flavoprotein</keyword>
<keyword id="KW-0472">Membrane</keyword>
<keyword id="KW-0560">Oxidoreductase</keyword>
<keyword id="KW-1185">Reference proteome</keyword>
<dbReference type="EC" id="1.1.5.3"/>
<dbReference type="EMBL" id="CP001956">
    <property type="protein sequence ID" value="ADE05130.1"/>
    <property type="molecule type" value="Genomic_DNA"/>
</dbReference>
<dbReference type="RefSeq" id="WP_013035654.1">
    <property type="nucleotide sequence ID" value="NC_013967.1"/>
</dbReference>
<dbReference type="SMR" id="D4GYI2"/>
<dbReference type="STRING" id="309800.HVO_1538"/>
<dbReference type="PaxDb" id="309800-C498_03045"/>
<dbReference type="EnsemblBacteria" id="ADE05130">
    <property type="protein sequence ID" value="ADE05130"/>
    <property type="gene ID" value="HVO_1538"/>
</dbReference>
<dbReference type="GeneID" id="8925946"/>
<dbReference type="KEGG" id="hvo:HVO_1538"/>
<dbReference type="eggNOG" id="arCOG00753">
    <property type="taxonomic scope" value="Archaea"/>
</dbReference>
<dbReference type="eggNOG" id="arCOG05746">
    <property type="taxonomic scope" value="Archaea"/>
</dbReference>
<dbReference type="HOGENOM" id="CLU_015740_0_1_2"/>
<dbReference type="OrthoDB" id="36306at2157"/>
<dbReference type="UniPathway" id="UPA00618">
    <property type="reaction ID" value="UER00673"/>
</dbReference>
<dbReference type="Proteomes" id="UP000008243">
    <property type="component" value="Chromosome"/>
</dbReference>
<dbReference type="GO" id="GO:0009331">
    <property type="term" value="C:glycerol-3-phosphate dehydrogenase (FAD) complex"/>
    <property type="evidence" value="ECO:0007669"/>
    <property type="project" value="InterPro"/>
</dbReference>
<dbReference type="GO" id="GO:0005886">
    <property type="term" value="C:plasma membrane"/>
    <property type="evidence" value="ECO:0007669"/>
    <property type="project" value="UniProtKB-SubCell"/>
</dbReference>
<dbReference type="GO" id="GO:0050660">
    <property type="term" value="F:flavin adenine dinucleotide binding"/>
    <property type="evidence" value="ECO:0007669"/>
    <property type="project" value="InterPro"/>
</dbReference>
<dbReference type="GO" id="GO:0010181">
    <property type="term" value="F:FMN binding"/>
    <property type="evidence" value="ECO:0007669"/>
    <property type="project" value="InterPro"/>
</dbReference>
<dbReference type="GO" id="GO:0004368">
    <property type="term" value="F:glycerol-3-phosphate dehydrogenase (quinone) activity"/>
    <property type="evidence" value="ECO:0007669"/>
    <property type="project" value="UniProtKB-EC"/>
</dbReference>
<dbReference type="GO" id="GO:0019563">
    <property type="term" value="P:glycerol catabolic process"/>
    <property type="evidence" value="ECO:0007669"/>
    <property type="project" value="UniProtKB-UniPathway"/>
</dbReference>
<dbReference type="GO" id="GO:0006072">
    <property type="term" value="P:glycerol-3-phosphate metabolic process"/>
    <property type="evidence" value="ECO:0007669"/>
    <property type="project" value="InterPro"/>
</dbReference>
<dbReference type="CDD" id="cd19946">
    <property type="entry name" value="GlpA-like_Fer2_BFD-like"/>
    <property type="match status" value="1"/>
</dbReference>
<dbReference type="Gene3D" id="1.10.10.1100">
    <property type="entry name" value="BFD-like [2Fe-2S]-binding domain"/>
    <property type="match status" value="1"/>
</dbReference>
<dbReference type="Gene3D" id="3.30.9.10">
    <property type="entry name" value="D-Amino Acid Oxidase, subunit A, domain 2"/>
    <property type="match status" value="1"/>
</dbReference>
<dbReference type="Gene3D" id="3.50.50.60">
    <property type="entry name" value="FAD/NAD(P)-binding domain"/>
    <property type="match status" value="2"/>
</dbReference>
<dbReference type="InterPro" id="IPR007419">
    <property type="entry name" value="BFD-like_2Fe2S-bd_dom"/>
</dbReference>
<dbReference type="InterPro" id="IPR041854">
    <property type="entry name" value="BFD-like_2Fe2S-bd_dom_sf"/>
</dbReference>
<dbReference type="InterPro" id="IPR006076">
    <property type="entry name" value="FAD-dep_OxRdtase"/>
</dbReference>
<dbReference type="InterPro" id="IPR036188">
    <property type="entry name" value="FAD/NAD-bd_sf"/>
</dbReference>
<dbReference type="InterPro" id="IPR000447">
    <property type="entry name" value="G3P_DH_FAD-dep"/>
</dbReference>
<dbReference type="InterPro" id="IPR017752">
    <property type="entry name" value="G3P_DH_GlpA_su"/>
</dbReference>
<dbReference type="NCBIfam" id="TIGR03377">
    <property type="entry name" value="glycerol3P_GlpA"/>
    <property type="match status" value="1"/>
</dbReference>
<dbReference type="NCBIfam" id="NF008313">
    <property type="entry name" value="PRK11101.1"/>
    <property type="match status" value="1"/>
</dbReference>
<dbReference type="PANTHER" id="PTHR11985">
    <property type="entry name" value="GLYCEROL-3-PHOSPHATE DEHYDROGENASE"/>
    <property type="match status" value="1"/>
</dbReference>
<dbReference type="PANTHER" id="PTHR11985:SF15">
    <property type="entry name" value="GLYCEROL-3-PHOSPHATE DEHYDROGENASE, MITOCHONDRIAL"/>
    <property type="match status" value="1"/>
</dbReference>
<dbReference type="Pfam" id="PF01266">
    <property type="entry name" value="DAO"/>
    <property type="match status" value="1"/>
</dbReference>
<dbReference type="Pfam" id="PF04324">
    <property type="entry name" value="Fer2_BFD"/>
    <property type="match status" value="1"/>
</dbReference>
<dbReference type="PRINTS" id="PR01001">
    <property type="entry name" value="FADG3PDH"/>
</dbReference>
<dbReference type="SUPFAM" id="SSF51905">
    <property type="entry name" value="FAD/NAD(P)-binding domain"/>
    <property type="match status" value="1"/>
</dbReference>
<dbReference type="PROSITE" id="PS00977">
    <property type="entry name" value="FAD_G3PDH_1"/>
    <property type="match status" value="1"/>
</dbReference>
<dbReference type="PROSITE" id="PS00978">
    <property type="entry name" value="FAD_G3PDH_2"/>
    <property type="match status" value="1"/>
</dbReference>
<proteinExistence type="evidence at protein level"/>
<name>GLPA1_HALVD</name>
<comment type="function">
    <text evidence="4">Conversion of glycerol 3-phosphate to dihydroxyacetone phosphate. Required for growth on glycerol and for glycerol metabolism.</text>
</comment>
<comment type="catalytic activity">
    <reaction evidence="4">
        <text>a quinone + sn-glycerol 3-phosphate = dihydroxyacetone phosphate + a quinol</text>
        <dbReference type="Rhea" id="RHEA:18977"/>
        <dbReference type="ChEBI" id="CHEBI:24646"/>
        <dbReference type="ChEBI" id="CHEBI:57597"/>
        <dbReference type="ChEBI" id="CHEBI:57642"/>
        <dbReference type="ChEBI" id="CHEBI:132124"/>
        <dbReference type="EC" id="1.1.5.3"/>
    </reaction>
</comment>
<comment type="cofactor">
    <cofactor evidence="1">
        <name>FAD</name>
        <dbReference type="ChEBI" id="CHEBI:57692"/>
    </cofactor>
</comment>
<comment type="cofactor">
    <cofactor evidence="1">
        <name>FMN</name>
        <dbReference type="ChEBI" id="CHEBI:58210"/>
    </cofactor>
</comment>
<comment type="activity regulation">
    <text evidence="4">Up-regulated by glycerol and no inhibition by glucose.</text>
</comment>
<comment type="pathway">
    <text>Polyol metabolism; glycerol degradation via glycerol kinase pathway; glycerone phosphate from sn-glycerol 3-phosphate (anaerobic route): step 1/1.</text>
</comment>
<comment type="subunit">
    <text evidence="1">Composed of a catalytic GlpA/B dimer and of membrane bound GlpC.</text>
</comment>
<comment type="subcellular location">
    <subcellularLocation>
        <location evidence="1">Cell membrane</location>
        <topology evidence="1">Peripheral membrane protein</topology>
    </subcellularLocation>
</comment>
<comment type="induction">
    <text evidence="4">Up-regulated by glycerol 3-phosphate.</text>
</comment>
<comment type="disruption phenotype">
    <text evidence="4">Unable to grow on glycerol. Can be complemented in trans by glpA2 under the control from a strong promoter.</text>
</comment>
<comment type="miscellaneous">
    <text evidence="6">H.volcanii contains 2 glpABC operons, one located on the main chromosome and the other on megaplasmid pHV4.</text>
</comment>
<comment type="similarity">
    <text evidence="5">Belongs to the FAD-dependent glycerol-3-phosphate dehydrogenase family.</text>
</comment>
<accession>D4GYI2</accession>
<protein>
    <recommendedName>
        <fullName>Anaerobic glycerol-3-phosphate dehydrogenase subunit A1</fullName>
        <shortName>G-3-P dehydrogenase A1</shortName>
        <shortName>G3PDH A1</shortName>
        <ecNumber>1.1.5.3</ecNumber>
    </recommendedName>
</protein>
<feature type="chain" id="PRO_0000428859" description="Anaerobic glycerol-3-phosphate dehydrogenase subunit A1">
    <location>
        <begin position="1"/>
        <end position="586"/>
    </location>
</feature>
<feature type="region of interest" description="Disordered" evidence="3">
    <location>
        <begin position="559"/>
        <end position="586"/>
    </location>
</feature>
<feature type="compositionally biased region" description="Acidic residues" evidence="3">
    <location>
        <begin position="574"/>
        <end position="586"/>
    </location>
</feature>
<feature type="binding site" evidence="2">
    <location>
        <begin position="6"/>
        <end position="34"/>
    </location>
    <ligand>
        <name>FAD</name>
        <dbReference type="ChEBI" id="CHEBI:57692"/>
    </ligand>
</feature>